<sequence length="286" mass="30155">MDITGKTRVLGIIGWPVAHSLSPLMQNAALEAMGLDWIYVPFAVRPEDLASAVAGLRTLGVSGFNVTIPHKTAIIPLLDRITPEARLMGAVNTVKREGDDLVGYNTDGEGFIRSLAEDLGFVPAGRRILVLGAGGAARAAVASLARGGAATVMIANRSVARGEELVEAFQGVFGGTQFAAMPLDIPLINAEVQNFDLLVNTTSVGMGETAFEGLDISRMNPAASVYDMVYAPWETPLLAEASRGGRRCANGIGMLVAQGECALAIWTGMEPPPGIMRRRVLAALKR</sequence>
<accession>Q39VU8</accession>
<feature type="chain" id="PRO_1000021285" description="Shikimate dehydrogenase (NADP(+))">
    <location>
        <begin position="1"/>
        <end position="286"/>
    </location>
</feature>
<feature type="active site" description="Proton acceptor" evidence="1">
    <location>
        <position position="71"/>
    </location>
</feature>
<feature type="binding site" evidence="1">
    <location>
        <begin position="20"/>
        <end position="22"/>
    </location>
    <ligand>
        <name>shikimate</name>
        <dbReference type="ChEBI" id="CHEBI:36208"/>
    </ligand>
</feature>
<feature type="binding site" evidence="1">
    <location>
        <position position="67"/>
    </location>
    <ligand>
        <name>shikimate</name>
        <dbReference type="ChEBI" id="CHEBI:36208"/>
    </ligand>
</feature>
<feature type="binding site" evidence="1">
    <location>
        <position position="92"/>
    </location>
    <ligand>
        <name>shikimate</name>
        <dbReference type="ChEBI" id="CHEBI:36208"/>
    </ligand>
</feature>
<feature type="binding site" evidence="1">
    <location>
        <position position="107"/>
    </location>
    <ligand>
        <name>shikimate</name>
        <dbReference type="ChEBI" id="CHEBI:36208"/>
    </ligand>
</feature>
<feature type="binding site" evidence="1">
    <location>
        <begin position="132"/>
        <end position="136"/>
    </location>
    <ligand>
        <name>NADP(+)</name>
        <dbReference type="ChEBI" id="CHEBI:58349"/>
    </ligand>
</feature>
<feature type="binding site" evidence="1">
    <location>
        <position position="228"/>
    </location>
    <ligand>
        <name>NADP(+)</name>
        <dbReference type="ChEBI" id="CHEBI:58349"/>
    </ligand>
</feature>
<feature type="binding site" evidence="1">
    <location>
        <position position="230"/>
    </location>
    <ligand>
        <name>shikimate</name>
        <dbReference type="ChEBI" id="CHEBI:36208"/>
    </ligand>
</feature>
<feature type="binding site" evidence="1">
    <location>
        <position position="251"/>
    </location>
    <ligand>
        <name>NADP(+)</name>
        <dbReference type="ChEBI" id="CHEBI:58349"/>
    </ligand>
</feature>
<proteinExistence type="inferred from homology"/>
<organism>
    <name type="scientific">Geobacter metallireducens (strain ATCC 53774 / DSM 7210 / GS-15)</name>
    <dbReference type="NCBI Taxonomy" id="269799"/>
    <lineage>
        <taxon>Bacteria</taxon>
        <taxon>Pseudomonadati</taxon>
        <taxon>Thermodesulfobacteriota</taxon>
        <taxon>Desulfuromonadia</taxon>
        <taxon>Geobacterales</taxon>
        <taxon>Geobacteraceae</taxon>
        <taxon>Geobacter</taxon>
    </lineage>
</organism>
<dbReference type="EC" id="1.1.1.25" evidence="1"/>
<dbReference type="EMBL" id="CP000148">
    <property type="protein sequence ID" value="ABB31626.1"/>
    <property type="molecule type" value="Genomic_DNA"/>
</dbReference>
<dbReference type="RefSeq" id="WP_004513116.1">
    <property type="nucleotide sequence ID" value="NC_007517.1"/>
</dbReference>
<dbReference type="SMR" id="Q39VU8"/>
<dbReference type="STRING" id="269799.Gmet_1392"/>
<dbReference type="KEGG" id="gme:Gmet_1392"/>
<dbReference type="eggNOG" id="COG0169">
    <property type="taxonomic scope" value="Bacteria"/>
</dbReference>
<dbReference type="HOGENOM" id="CLU_044063_4_1_7"/>
<dbReference type="UniPathway" id="UPA00053">
    <property type="reaction ID" value="UER00087"/>
</dbReference>
<dbReference type="Proteomes" id="UP000007073">
    <property type="component" value="Chromosome"/>
</dbReference>
<dbReference type="GO" id="GO:0005829">
    <property type="term" value="C:cytosol"/>
    <property type="evidence" value="ECO:0007669"/>
    <property type="project" value="TreeGrafter"/>
</dbReference>
<dbReference type="GO" id="GO:0050661">
    <property type="term" value="F:NADP binding"/>
    <property type="evidence" value="ECO:0007669"/>
    <property type="project" value="InterPro"/>
</dbReference>
<dbReference type="GO" id="GO:0004764">
    <property type="term" value="F:shikimate 3-dehydrogenase (NADP+) activity"/>
    <property type="evidence" value="ECO:0007669"/>
    <property type="project" value="UniProtKB-UniRule"/>
</dbReference>
<dbReference type="GO" id="GO:0008652">
    <property type="term" value="P:amino acid biosynthetic process"/>
    <property type="evidence" value="ECO:0007669"/>
    <property type="project" value="UniProtKB-KW"/>
</dbReference>
<dbReference type="GO" id="GO:0009073">
    <property type="term" value="P:aromatic amino acid family biosynthetic process"/>
    <property type="evidence" value="ECO:0007669"/>
    <property type="project" value="UniProtKB-KW"/>
</dbReference>
<dbReference type="GO" id="GO:0009423">
    <property type="term" value="P:chorismate biosynthetic process"/>
    <property type="evidence" value="ECO:0007669"/>
    <property type="project" value="UniProtKB-UniRule"/>
</dbReference>
<dbReference type="GO" id="GO:0019632">
    <property type="term" value="P:shikimate metabolic process"/>
    <property type="evidence" value="ECO:0007669"/>
    <property type="project" value="InterPro"/>
</dbReference>
<dbReference type="CDD" id="cd01065">
    <property type="entry name" value="NAD_bind_Shikimate_DH"/>
    <property type="match status" value="1"/>
</dbReference>
<dbReference type="Gene3D" id="3.40.50.10860">
    <property type="entry name" value="Leucine Dehydrogenase, chain A, domain 1"/>
    <property type="match status" value="1"/>
</dbReference>
<dbReference type="Gene3D" id="3.40.50.720">
    <property type="entry name" value="NAD(P)-binding Rossmann-like Domain"/>
    <property type="match status" value="1"/>
</dbReference>
<dbReference type="HAMAP" id="MF_00222">
    <property type="entry name" value="Shikimate_DH_AroE"/>
    <property type="match status" value="1"/>
</dbReference>
<dbReference type="InterPro" id="IPR046346">
    <property type="entry name" value="Aminoacid_DH-like_N_sf"/>
</dbReference>
<dbReference type="InterPro" id="IPR036291">
    <property type="entry name" value="NAD(P)-bd_dom_sf"/>
</dbReference>
<dbReference type="InterPro" id="IPR041121">
    <property type="entry name" value="SDH_C"/>
</dbReference>
<dbReference type="InterPro" id="IPR011342">
    <property type="entry name" value="Shikimate_DH"/>
</dbReference>
<dbReference type="InterPro" id="IPR013708">
    <property type="entry name" value="Shikimate_DH-bd_N"/>
</dbReference>
<dbReference type="InterPro" id="IPR022893">
    <property type="entry name" value="Shikimate_DH_fam"/>
</dbReference>
<dbReference type="InterPro" id="IPR006151">
    <property type="entry name" value="Shikm_DH/Glu-tRNA_Rdtase"/>
</dbReference>
<dbReference type="NCBIfam" id="TIGR00507">
    <property type="entry name" value="aroE"/>
    <property type="match status" value="1"/>
</dbReference>
<dbReference type="NCBIfam" id="NF001314">
    <property type="entry name" value="PRK00258.2-2"/>
    <property type="match status" value="1"/>
</dbReference>
<dbReference type="PANTHER" id="PTHR21089:SF1">
    <property type="entry name" value="BIFUNCTIONAL 3-DEHYDROQUINATE DEHYDRATASE_SHIKIMATE DEHYDROGENASE, CHLOROPLASTIC"/>
    <property type="match status" value="1"/>
</dbReference>
<dbReference type="PANTHER" id="PTHR21089">
    <property type="entry name" value="SHIKIMATE DEHYDROGENASE"/>
    <property type="match status" value="1"/>
</dbReference>
<dbReference type="Pfam" id="PF18317">
    <property type="entry name" value="SDH_C"/>
    <property type="match status" value="1"/>
</dbReference>
<dbReference type="Pfam" id="PF01488">
    <property type="entry name" value="Shikimate_DH"/>
    <property type="match status" value="1"/>
</dbReference>
<dbReference type="Pfam" id="PF08501">
    <property type="entry name" value="Shikimate_dh_N"/>
    <property type="match status" value="1"/>
</dbReference>
<dbReference type="SUPFAM" id="SSF53223">
    <property type="entry name" value="Aminoacid dehydrogenase-like, N-terminal domain"/>
    <property type="match status" value="1"/>
</dbReference>
<dbReference type="SUPFAM" id="SSF51735">
    <property type="entry name" value="NAD(P)-binding Rossmann-fold domains"/>
    <property type="match status" value="1"/>
</dbReference>
<comment type="function">
    <text evidence="1">Involved in the biosynthesis of the chorismate, which leads to the biosynthesis of aromatic amino acids. Catalyzes the reversible NADPH linked reduction of 3-dehydroshikimate (DHSA) to yield shikimate (SA).</text>
</comment>
<comment type="catalytic activity">
    <reaction evidence="1">
        <text>shikimate + NADP(+) = 3-dehydroshikimate + NADPH + H(+)</text>
        <dbReference type="Rhea" id="RHEA:17737"/>
        <dbReference type="ChEBI" id="CHEBI:15378"/>
        <dbReference type="ChEBI" id="CHEBI:16630"/>
        <dbReference type="ChEBI" id="CHEBI:36208"/>
        <dbReference type="ChEBI" id="CHEBI:57783"/>
        <dbReference type="ChEBI" id="CHEBI:58349"/>
        <dbReference type="EC" id="1.1.1.25"/>
    </reaction>
</comment>
<comment type="pathway">
    <text evidence="1">Metabolic intermediate biosynthesis; chorismate biosynthesis; chorismate from D-erythrose 4-phosphate and phosphoenolpyruvate: step 4/7.</text>
</comment>
<comment type="subunit">
    <text evidence="1">Homodimer.</text>
</comment>
<comment type="similarity">
    <text evidence="1">Belongs to the shikimate dehydrogenase family.</text>
</comment>
<name>AROE_GEOMG</name>
<evidence type="ECO:0000255" key="1">
    <source>
        <dbReference type="HAMAP-Rule" id="MF_00222"/>
    </source>
</evidence>
<gene>
    <name evidence="1" type="primary">aroE</name>
    <name type="ordered locus">Gmet_1392</name>
</gene>
<reference key="1">
    <citation type="journal article" date="2009" name="BMC Microbiol.">
        <title>The genome sequence of Geobacter metallireducens: features of metabolism, physiology and regulation common and dissimilar to Geobacter sulfurreducens.</title>
        <authorList>
            <person name="Aklujkar M."/>
            <person name="Krushkal J."/>
            <person name="DiBartolo G."/>
            <person name="Lapidus A."/>
            <person name="Land M.L."/>
            <person name="Lovley D.R."/>
        </authorList>
    </citation>
    <scope>NUCLEOTIDE SEQUENCE [LARGE SCALE GENOMIC DNA]</scope>
    <source>
        <strain>ATCC 53774 / DSM 7210 / GS-15</strain>
    </source>
</reference>
<protein>
    <recommendedName>
        <fullName evidence="1">Shikimate dehydrogenase (NADP(+))</fullName>
        <shortName evidence="1">SDH</shortName>
        <ecNumber evidence="1">1.1.1.25</ecNumber>
    </recommendedName>
</protein>
<keyword id="KW-0028">Amino-acid biosynthesis</keyword>
<keyword id="KW-0057">Aromatic amino acid biosynthesis</keyword>
<keyword id="KW-0521">NADP</keyword>
<keyword id="KW-0560">Oxidoreductase</keyword>
<keyword id="KW-1185">Reference proteome</keyword>